<sequence>MTEQETYCGFIAIVGRPNVGKSTLLNKILGQKISITSRKAQTTRHRIVGIHTEGVYQAVYVDTPGLHIEEKRAINRLMNRAASSAIGDVDLIIFVVDGTHWNDDDEMVLNKLRRAKAPVVLAINKVDNIKNKDELLPFITDVSQKLEFKEIIPISAQRGNNIHNLEKIVRTSLRKGVHHFPEDYVTDRSQRFMASEIIREKLMRFTGEELPYSVTVEIEQFKLNDRGIYEINGLILVEREGQKKMVIGAKGQKLKTIGTEARQDMERLFDNKVHLELWVKVKSGWADDERALRSLGYIDE</sequence>
<feature type="chain" id="PRO_1000121329" description="GTPase Era">
    <location>
        <begin position="1"/>
        <end position="300"/>
    </location>
</feature>
<feature type="domain" description="Era-type G" evidence="2">
    <location>
        <begin position="7"/>
        <end position="182"/>
    </location>
</feature>
<feature type="domain" description="KH type-2" evidence="1">
    <location>
        <begin position="206"/>
        <end position="283"/>
    </location>
</feature>
<feature type="region of interest" description="G1" evidence="2">
    <location>
        <begin position="15"/>
        <end position="22"/>
    </location>
</feature>
<feature type="region of interest" description="G2" evidence="2">
    <location>
        <begin position="41"/>
        <end position="45"/>
    </location>
</feature>
<feature type="region of interest" description="G3" evidence="2">
    <location>
        <begin position="62"/>
        <end position="65"/>
    </location>
</feature>
<feature type="region of interest" description="G4" evidence="2">
    <location>
        <begin position="124"/>
        <end position="127"/>
    </location>
</feature>
<feature type="region of interest" description="G5" evidence="2">
    <location>
        <begin position="154"/>
        <end position="156"/>
    </location>
</feature>
<feature type="binding site" evidence="1">
    <location>
        <begin position="15"/>
        <end position="22"/>
    </location>
    <ligand>
        <name>GTP</name>
        <dbReference type="ChEBI" id="CHEBI:37565"/>
    </ligand>
</feature>
<feature type="binding site" evidence="1">
    <location>
        <begin position="62"/>
        <end position="66"/>
    </location>
    <ligand>
        <name>GTP</name>
        <dbReference type="ChEBI" id="CHEBI:37565"/>
    </ligand>
</feature>
<feature type="binding site" evidence="1">
    <location>
        <begin position="124"/>
        <end position="127"/>
    </location>
    <ligand>
        <name>GTP</name>
        <dbReference type="ChEBI" id="CHEBI:37565"/>
    </ligand>
</feature>
<keyword id="KW-0997">Cell inner membrane</keyword>
<keyword id="KW-1003">Cell membrane</keyword>
<keyword id="KW-0963">Cytoplasm</keyword>
<keyword id="KW-0342">GTP-binding</keyword>
<keyword id="KW-0472">Membrane</keyword>
<keyword id="KW-0547">Nucleotide-binding</keyword>
<keyword id="KW-0690">Ribosome biogenesis</keyword>
<keyword id="KW-0694">RNA-binding</keyword>
<keyword id="KW-0699">rRNA-binding</keyword>
<reference key="1">
    <citation type="journal article" date="2007" name="J. Bacteriol.">
        <title>Complete genome sequence of Haemophilus somnus (Histophilus somni) strain 129Pt and comparison to Haemophilus ducreyi 35000HP and Haemophilus influenzae Rd.</title>
        <authorList>
            <person name="Challacombe J.F."/>
            <person name="Duncan A.J."/>
            <person name="Brettin T.S."/>
            <person name="Bruce D."/>
            <person name="Chertkov O."/>
            <person name="Detter J.C."/>
            <person name="Han C.S."/>
            <person name="Misra M."/>
            <person name="Richardson P."/>
            <person name="Tapia R."/>
            <person name="Thayer N."/>
            <person name="Xie G."/>
            <person name="Inzana T.J."/>
        </authorList>
    </citation>
    <scope>NUCLEOTIDE SEQUENCE [LARGE SCALE GENOMIC DNA]</scope>
    <source>
        <strain>129Pt</strain>
    </source>
</reference>
<accession>Q0I4Z4</accession>
<comment type="function">
    <text evidence="1">An essential GTPase that binds both GDP and GTP, with rapid nucleotide exchange. Plays a role in 16S rRNA processing and 30S ribosomal subunit biogenesis and possibly also in cell cycle regulation and energy metabolism.</text>
</comment>
<comment type="subunit">
    <text evidence="1">Monomer.</text>
</comment>
<comment type="subcellular location">
    <subcellularLocation>
        <location>Cytoplasm</location>
    </subcellularLocation>
    <subcellularLocation>
        <location evidence="1">Cell inner membrane</location>
        <topology evidence="1">Peripheral membrane protein</topology>
    </subcellularLocation>
</comment>
<comment type="similarity">
    <text evidence="1 2">Belongs to the TRAFAC class TrmE-Era-EngA-EngB-Septin-like GTPase superfamily. Era GTPase family.</text>
</comment>
<proteinExistence type="inferred from homology"/>
<name>ERA_HISS1</name>
<evidence type="ECO:0000255" key="1">
    <source>
        <dbReference type="HAMAP-Rule" id="MF_00367"/>
    </source>
</evidence>
<evidence type="ECO:0000255" key="2">
    <source>
        <dbReference type="PROSITE-ProRule" id="PRU01050"/>
    </source>
</evidence>
<dbReference type="EMBL" id="CP000436">
    <property type="protein sequence ID" value="ABI25514.1"/>
    <property type="molecule type" value="Genomic_DNA"/>
</dbReference>
<dbReference type="SMR" id="Q0I4Z4"/>
<dbReference type="KEGG" id="hso:HS_1239"/>
<dbReference type="eggNOG" id="COG1159">
    <property type="taxonomic scope" value="Bacteria"/>
</dbReference>
<dbReference type="HOGENOM" id="CLU_038009_1_2_6"/>
<dbReference type="GO" id="GO:0005829">
    <property type="term" value="C:cytosol"/>
    <property type="evidence" value="ECO:0007669"/>
    <property type="project" value="TreeGrafter"/>
</dbReference>
<dbReference type="GO" id="GO:0005886">
    <property type="term" value="C:plasma membrane"/>
    <property type="evidence" value="ECO:0007669"/>
    <property type="project" value="UniProtKB-SubCell"/>
</dbReference>
<dbReference type="GO" id="GO:0005525">
    <property type="term" value="F:GTP binding"/>
    <property type="evidence" value="ECO:0007669"/>
    <property type="project" value="UniProtKB-UniRule"/>
</dbReference>
<dbReference type="GO" id="GO:0003924">
    <property type="term" value="F:GTPase activity"/>
    <property type="evidence" value="ECO:0007669"/>
    <property type="project" value="UniProtKB-UniRule"/>
</dbReference>
<dbReference type="GO" id="GO:0043024">
    <property type="term" value="F:ribosomal small subunit binding"/>
    <property type="evidence" value="ECO:0007669"/>
    <property type="project" value="TreeGrafter"/>
</dbReference>
<dbReference type="GO" id="GO:0070181">
    <property type="term" value="F:small ribosomal subunit rRNA binding"/>
    <property type="evidence" value="ECO:0007669"/>
    <property type="project" value="UniProtKB-UniRule"/>
</dbReference>
<dbReference type="GO" id="GO:0000028">
    <property type="term" value="P:ribosomal small subunit assembly"/>
    <property type="evidence" value="ECO:0007669"/>
    <property type="project" value="TreeGrafter"/>
</dbReference>
<dbReference type="CDD" id="cd04163">
    <property type="entry name" value="Era"/>
    <property type="match status" value="1"/>
</dbReference>
<dbReference type="CDD" id="cd22534">
    <property type="entry name" value="KH-II_Era"/>
    <property type="match status" value="1"/>
</dbReference>
<dbReference type="FunFam" id="3.30.300.20:FF:000003">
    <property type="entry name" value="GTPase Era"/>
    <property type="match status" value="1"/>
</dbReference>
<dbReference type="FunFam" id="3.40.50.300:FF:000094">
    <property type="entry name" value="GTPase Era"/>
    <property type="match status" value="1"/>
</dbReference>
<dbReference type="Gene3D" id="3.30.300.20">
    <property type="match status" value="1"/>
</dbReference>
<dbReference type="Gene3D" id="3.40.50.300">
    <property type="entry name" value="P-loop containing nucleotide triphosphate hydrolases"/>
    <property type="match status" value="1"/>
</dbReference>
<dbReference type="HAMAP" id="MF_00367">
    <property type="entry name" value="GTPase_Era"/>
    <property type="match status" value="1"/>
</dbReference>
<dbReference type="InterPro" id="IPR030388">
    <property type="entry name" value="G_ERA_dom"/>
</dbReference>
<dbReference type="InterPro" id="IPR006073">
    <property type="entry name" value="GTP-bd"/>
</dbReference>
<dbReference type="InterPro" id="IPR005662">
    <property type="entry name" value="GTPase_Era-like"/>
</dbReference>
<dbReference type="InterPro" id="IPR015946">
    <property type="entry name" value="KH_dom-like_a/b"/>
</dbReference>
<dbReference type="InterPro" id="IPR004044">
    <property type="entry name" value="KH_dom_type_2"/>
</dbReference>
<dbReference type="InterPro" id="IPR009019">
    <property type="entry name" value="KH_sf_prok-type"/>
</dbReference>
<dbReference type="InterPro" id="IPR027417">
    <property type="entry name" value="P-loop_NTPase"/>
</dbReference>
<dbReference type="InterPro" id="IPR005225">
    <property type="entry name" value="Small_GTP-bd"/>
</dbReference>
<dbReference type="NCBIfam" id="TIGR00436">
    <property type="entry name" value="era"/>
    <property type="match status" value="1"/>
</dbReference>
<dbReference type="NCBIfam" id="NF000908">
    <property type="entry name" value="PRK00089.1"/>
    <property type="match status" value="1"/>
</dbReference>
<dbReference type="NCBIfam" id="TIGR00231">
    <property type="entry name" value="small_GTP"/>
    <property type="match status" value="1"/>
</dbReference>
<dbReference type="PANTHER" id="PTHR42698">
    <property type="entry name" value="GTPASE ERA"/>
    <property type="match status" value="1"/>
</dbReference>
<dbReference type="PANTHER" id="PTHR42698:SF1">
    <property type="entry name" value="GTPASE ERA, MITOCHONDRIAL"/>
    <property type="match status" value="1"/>
</dbReference>
<dbReference type="Pfam" id="PF07650">
    <property type="entry name" value="KH_2"/>
    <property type="match status" value="1"/>
</dbReference>
<dbReference type="Pfam" id="PF01926">
    <property type="entry name" value="MMR_HSR1"/>
    <property type="match status" value="1"/>
</dbReference>
<dbReference type="PRINTS" id="PR00326">
    <property type="entry name" value="GTP1OBG"/>
</dbReference>
<dbReference type="SUPFAM" id="SSF52540">
    <property type="entry name" value="P-loop containing nucleoside triphosphate hydrolases"/>
    <property type="match status" value="1"/>
</dbReference>
<dbReference type="SUPFAM" id="SSF54814">
    <property type="entry name" value="Prokaryotic type KH domain (KH-domain type II)"/>
    <property type="match status" value="1"/>
</dbReference>
<dbReference type="PROSITE" id="PS51713">
    <property type="entry name" value="G_ERA"/>
    <property type="match status" value="1"/>
</dbReference>
<dbReference type="PROSITE" id="PS50823">
    <property type="entry name" value="KH_TYPE_2"/>
    <property type="match status" value="1"/>
</dbReference>
<organism>
    <name type="scientific">Histophilus somni (strain 129Pt)</name>
    <name type="common">Haemophilus somnus</name>
    <dbReference type="NCBI Taxonomy" id="205914"/>
    <lineage>
        <taxon>Bacteria</taxon>
        <taxon>Pseudomonadati</taxon>
        <taxon>Pseudomonadota</taxon>
        <taxon>Gammaproteobacteria</taxon>
        <taxon>Pasteurellales</taxon>
        <taxon>Pasteurellaceae</taxon>
        <taxon>Histophilus</taxon>
    </lineage>
</organism>
<protein>
    <recommendedName>
        <fullName evidence="1">GTPase Era</fullName>
    </recommendedName>
</protein>
<gene>
    <name evidence="1" type="primary">era</name>
    <name type="ordered locus">HS_1239</name>
</gene>